<reference key="1">
    <citation type="journal article" date="2005" name="Science">
        <title>Genome streamlining in a cosmopolitan oceanic bacterium.</title>
        <authorList>
            <person name="Giovannoni S.J."/>
            <person name="Tripp H.J."/>
            <person name="Givan S."/>
            <person name="Podar M."/>
            <person name="Vergin K.L."/>
            <person name="Baptista D."/>
            <person name="Bibbs L."/>
            <person name="Eads J."/>
            <person name="Richardson T.H."/>
            <person name="Noordewier M."/>
            <person name="Rappe M.S."/>
            <person name="Short J.M."/>
            <person name="Carrington J.C."/>
            <person name="Mathur E.J."/>
        </authorList>
    </citation>
    <scope>NUCLEOTIDE SEQUENCE [LARGE SCALE GENOMIC DNA]</scope>
    <source>
        <strain>HTCC1062</strain>
    </source>
</reference>
<protein>
    <recommendedName>
        <fullName>Putative protein-export protein SecB</fullName>
    </recommendedName>
</protein>
<feature type="chain" id="PRO_0000055391" description="Putative protein-export protein SecB">
    <location>
        <begin position="1"/>
        <end position="140"/>
    </location>
</feature>
<proteinExistence type="inferred from homology"/>
<comment type="function">
    <text evidence="1">One of the proteins required for the normal export of preproteins out of the cell cytoplasm. It is a molecular chaperone that binds to a subset of precursor proteins, maintaining them in a translocation-competent state. It also specifically binds to its receptor SecA (By similarity).</text>
</comment>
<comment type="subunit">
    <text evidence="1">Homotetramer, a dimer of dimers. One homotetramer interacts with 1 SecA dimer (By similarity).</text>
</comment>
<comment type="subcellular location">
    <subcellularLocation>
        <location evidence="1">Cytoplasm</location>
    </subcellularLocation>
</comment>
<comment type="similarity">
    <text evidence="2">Belongs to the SecB family.</text>
</comment>
<keyword id="KW-0143">Chaperone</keyword>
<keyword id="KW-0963">Cytoplasm</keyword>
<keyword id="KW-0653">Protein transport</keyword>
<keyword id="KW-1185">Reference proteome</keyword>
<keyword id="KW-0811">Translocation</keyword>
<keyword id="KW-0813">Transport</keyword>
<sequence length="140" mass="16347">MTENYKIIGNFIKDMSSETPDTPTYIFVRDKISKYKLNIDINSKAVKNGIIEVNTILRFSDQPEILKKAHFEITYTSIVKVDEKVSDKKEMEKIILCDVPNKIYPDLERIFLNLLTDSGYPGIKFEKKIDFTELYKQRAN</sequence>
<dbReference type="EMBL" id="CP000084">
    <property type="protein sequence ID" value="AAZ21161.1"/>
    <property type="molecule type" value="Genomic_DNA"/>
</dbReference>
<dbReference type="RefSeq" id="WP_006997569.1">
    <property type="nucleotide sequence ID" value="NC_007205.1"/>
</dbReference>
<dbReference type="SMR" id="Q4FNS8"/>
<dbReference type="STRING" id="335992.SAR11_0338"/>
<dbReference type="GeneID" id="66294837"/>
<dbReference type="KEGG" id="pub:SAR11_0338"/>
<dbReference type="eggNOG" id="COG1952">
    <property type="taxonomic scope" value="Bacteria"/>
</dbReference>
<dbReference type="HOGENOM" id="CLU_1831483_0_0_5"/>
<dbReference type="Proteomes" id="UP000002528">
    <property type="component" value="Chromosome"/>
</dbReference>
<dbReference type="GO" id="GO:0005737">
    <property type="term" value="C:cytoplasm"/>
    <property type="evidence" value="ECO:0007669"/>
    <property type="project" value="UniProtKB-SubCell"/>
</dbReference>
<dbReference type="GO" id="GO:0051082">
    <property type="term" value="F:unfolded protein binding"/>
    <property type="evidence" value="ECO:0007669"/>
    <property type="project" value="InterPro"/>
</dbReference>
<dbReference type="GO" id="GO:0051262">
    <property type="term" value="P:protein tetramerization"/>
    <property type="evidence" value="ECO:0007669"/>
    <property type="project" value="InterPro"/>
</dbReference>
<dbReference type="GO" id="GO:0015031">
    <property type="term" value="P:protein transport"/>
    <property type="evidence" value="ECO:0007669"/>
    <property type="project" value="UniProtKB-KW"/>
</dbReference>
<dbReference type="Gene3D" id="3.10.420.10">
    <property type="entry name" value="SecB-like"/>
    <property type="match status" value="1"/>
</dbReference>
<dbReference type="InterPro" id="IPR003708">
    <property type="entry name" value="SecB"/>
</dbReference>
<dbReference type="InterPro" id="IPR035958">
    <property type="entry name" value="SecB-like_sf"/>
</dbReference>
<dbReference type="Pfam" id="PF02556">
    <property type="entry name" value="SecB"/>
    <property type="match status" value="1"/>
</dbReference>
<dbReference type="SUPFAM" id="SSF54611">
    <property type="entry name" value="SecB-like"/>
    <property type="match status" value="1"/>
</dbReference>
<organism>
    <name type="scientific">Pelagibacter ubique (strain HTCC1062)</name>
    <dbReference type="NCBI Taxonomy" id="335992"/>
    <lineage>
        <taxon>Bacteria</taxon>
        <taxon>Pseudomonadati</taxon>
        <taxon>Pseudomonadota</taxon>
        <taxon>Alphaproteobacteria</taxon>
        <taxon>Candidatus Pelagibacterales</taxon>
        <taxon>Candidatus Pelagibacteraceae</taxon>
        <taxon>Candidatus Pelagibacter</taxon>
    </lineage>
</organism>
<gene>
    <name type="primary">secB</name>
    <name type="ordered locus">SAR11_0338</name>
</gene>
<name>SECB_PELUB</name>
<evidence type="ECO:0000250" key="1"/>
<evidence type="ECO:0000305" key="2"/>
<accession>Q4FNS8</accession>